<proteinExistence type="inferred from homology"/>
<comment type="function">
    <text evidence="1">Catalyzes the ATP-dependent phosphorylation of N-acetyl-L-glutamate.</text>
</comment>
<comment type="catalytic activity">
    <reaction evidence="1">
        <text>N-acetyl-L-glutamate + ATP = N-acetyl-L-glutamyl 5-phosphate + ADP</text>
        <dbReference type="Rhea" id="RHEA:14629"/>
        <dbReference type="ChEBI" id="CHEBI:30616"/>
        <dbReference type="ChEBI" id="CHEBI:44337"/>
        <dbReference type="ChEBI" id="CHEBI:57936"/>
        <dbReference type="ChEBI" id="CHEBI:456216"/>
        <dbReference type="EC" id="2.7.2.8"/>
    </reaction>
</comment>
<comment type="pathway">
    <text evidence="1">Amino-acid biosynthesis; L-arginine biosynthesis; N(2)-acetyl-L-ornithine from L-glutamate: step 2/4.</text>
</comment>
<comment type="subcellular location">
    <subcellularLocation>
        <location evidence="1">Cytoplasm</location>
    </subcellularLocation>
</comment>
<comment type="similarity">
    <text evidence="1">Belongs to the acetylglutamate kinase family. ArgB subfamily.</text>
</comment>
<dbReference type="EC" id="2.7.2.8" evidence="1"/>
<dbReference type="EMBL" id="CP000930">
    <property type="protein sequence ID" value="ABZ84007.1"/>
    <property type="molecule type" value="Genomic_DNA"/>
</dbReference>
<dbReference type="RefSeq" id="WP_012282523.1">
    <property type="nucleotide sequence ID" value="NC_010337.2"/>
</dbReference>
<dbReference type="SMR" id="B0TCA8"/>
<dbReference type="STRING" id="498761.HM1_1430"/>
<dbReference type="KEGG" id="hmo:HM1_1430"/>
<dbReference type="eggNOG" id="COG0548">
    <property type="taxonomic scope" value="Bacteria"/>
</dbReference>
<dbReference type="HOGENOM" id="CLU_053680_0_0_9"/>
<dbReference type="OrthoDB" id="9803155at2"/>
<dbReference type="UniPathway" id="UPA00068">
    <property type="reaction ID" value="UER00107"/>
</dbReference>
<dbReference type="Proteomes" id="UP000008550">
    <property type="component" value="Chromosome"/>
</dbReference>
<dbReference type="GO" id="GO:0005737">
    <property type="term" value="C:cytoplasm"/>
    <property type="evidence" value="ECO:0007669"/>
    <property type="project" value="UniProtKB-SubCell"/>
</dbReference>
<dbReference type="GO" id="GO:0003991">
    <property type="term" value="F:acetylglutamate kinase activity"/>
    <property type="evidence" value="ECO:0007669"/>
    <property type="project" value="UniProtKB-UniRule"/>
</dbReference>
<dbReference type="GO" id="GO:0005524">
    <property type="term" value="F:ATP binding"/>
    <property type="evidence" value="ECO:0007669"/>
    <property type="project" value="UniProtKB-UniRule"/>
</dbReference>
<dbReference type="GO" id="GO:0042450">
    <property type="term" value="P:arginine biosynthetic process via ornithine"/>
    <property type="evidence" value="ECO:0007669"/>
    <property type="project" value="UniProtKB-UniRule"/>
</dbReference>
<dbReference type="GO" id="GO:0006526">
    <property type="term" value="P:L-arginine biosynthetic process"/>
    <property type="evidence" value="ECO:0007669"/>
    <property type="project" value="UniProtKB-UniPathway"/>
</dbReference>
<dbReference type="CDD" id="cd04250">
    <property type="entry name" value="AAK_NAGK-C"/>
    <property type="match status" value="1"/>
</dbReference>
<dbReference type="FunFam" id="3.40.1160.10:FF:000004">
    <property type="entry name" value="Acetylglutamate kinase"/>
    <property type="match status" value="1"/>
</dbReference>
<dbReference type="Gene3D" id="3.40.1160.10">
    <property type="entry name" value="Acetylglutamate kinase-like"/>
    <property type="match status" value="1"/>
</dbReference>
<dbReference type="HAMAP" id="MF_00082">
    <property type="entry name" value="ArgB"/>
    <property type="match status" value="1"/>
</dbReference>
<dbReference type="InterPro" id="IPR036393">
    <property type="entry name" value="AceGlu_kinase-like_sf"/>
</dbReference>
<dbReference type="InterPro" id="IPR004662">
    <property type="entry name" value="AcgluKinase_fam"/>
</dbReference>
<dbReference type="InterPro" id="IPR037528">
    <property type="entry name" value="ArgB"/>
</dbReference>
<dbReference type="InterPro" id="IPR001048">
    <property type="entry name" value="Asp/Glu/Uridylate_kinase"/>
</dbReference>
<dbReference type="InterPro" id="IPR001057">
    <property type="entry name" value="Glu/AcGlu_kinase"/>
</dbReference>
<dbReference type="InterPro" id="IPR041727">
    <property type="entry name" value="NAGK-C"/>
</dbReference>
<dbReference type="NCBIfam" id="TIGR00761">
    <property type="entry name" value="argB"/>
    <property type="match status" value="1"/>
</dbReference>
<dbReference type="PANTHER" id="PTHR23342">
    <property type="entry name" value="N-ACETYLGLUTAMATE SYNTHASE"/>
    <property type="match status" value="1"/>
</dbReference>
<dbReference type="PANTHER" id="PTHR23342:SF0">
    <property type="entry name" value="N-ACETYLGLUTAMATE SYNTHASE, MITOCHONDRIAL"/>
    <property type="match status" value="1"/>
</dbReference>
<dbReference type="Pfam" id="PF00696">
    <property type="entry name" value="AA_kinase"/>
    <property type="match status" value="1"/>
</dbReference>
<dbReference type="PIRSF" id="PIRSF000728">
    <property type="entry name" value="NAGK"/>
    <property type="match status" value="1"/>
</dbReference>
<dbReference type="PRINTS" id="PR00474">
    <property type="entry name" value="GLU5KINASE"/>
</dbReference>
<dbReference type="SUPFAM" id="SSF53633">
    <property type="entry name" value="Carbamate kinase-like"/>
    <property type="match status" value="1"/>
</dbReference>
<feature type="chain" id="PRO_1000092861" description="Acetylglutamate kinase">
    <location>
        <begin position="1"/>
        <end position="295"/>
    </location>
</feature>
<feature type="binding site" evidence="1">
    <location>
        <begin position="64"/>
        <end position="65"/>
    </location>
    <ligand>
        <name>substrate</name>
    </ligand>
</feature>
<feature type="binding site" evidence="1">
    <location>
        <position position="86"/>
    </location>
    <ligand>
        <name>substrate</name>
    </ligand>
</feature>
<feature type="binding site" evidence="1">
    <location>
        <position position="190"/>
    </location>
    <ligand>
        <name>substrate</name>
    </ligand>
</feature>
<feature type="site" description="Transition state stabilizer" evidence="1">
    <location>
        <position position="29"/>
    </location>
</feature>
<feature type="site" description="Transition state stabilizer" evidence="1">
    <location>
        <position position="253"/>
    </location>
</feature>
<evidence type="ECO:0000255" key="1">
    <source>
        <dbReference type="HAMAP-Rule" id="MF_00082"/>
    </source>
</evidence>
<organism>
    <name type="scientific">Heliobacterium modesticaldum (strain ATCC 51547 / Ice1)</name>
    <dbReference type="NCBI Taxonomy" id="498761"/>
    <lineage>
        <taxon>Bacteria</taxon>
        <taxon>Bacillati</taxon>
        <taxon>Bacillota</taxon>
        <taxon>Clostridia</taxon>
        <taxon>Eubacteriales</taxon>
        <taxon>Heliobacteriaceae</taxon>
        <taxon>Heliomicrobium</taxon>
    </lineage>
</organism>
<gene>
    <name evidence="1" type="primary">argB</name>
    <name type="ordered locus">Helmi_13820</name>
    <name type="ORF">HM1_1430</name>
</gene>
<keyword id="KW-0028">Amino-acid biosynthesis</keyword>
<keyword id="KW-0055">Arginine biosynthesis</keyword>
<keyword id="KW-0067">ATP-binding</keyword>
<keyword id="KW-0963">Cytoplasm</keyword>
<keyword id="KW-0418">Kinase</keyword>
<keyword id="KW-0547">Nucleotide-binding</keyword>
<keyword id="KW-1185">Reference proteome</keyword>
<keyword id="KW-0808">Transferase</keyword>
<reference key="1">
    <citation type="journal article" date="2008" name="J. Bacteriol.">
        <title>The genome of Heliobacterium modesticaldum, a phototrophic representative of the Firmicutes containing the simplest photosynthetic apparatus.</title>
        <authorList>
            <person name="Sattley W.M."/>
            <person name="Madigan M.T."/>
            <person name="Swingley W.D."/>
            <person name="Cheung P.C."/>
            <person name="Clocksin K.M."/>
            <person name="Conrad A.L."/>
            <person name="Dejesa L.C."/>
            <person name="Honchak B.M."/>
            <person name="Jung D.O."/>
            <person name="Karbach L.E."/>
            <person name="Kurdoglu A."/>
            <person name="Lahiri S."/>
            <person name="Mastrian S.D."/>
            <person name="Page L.E."/>
            <person name="Taylor H.L."/>
            <person name="Wang Z.T."/>
            <person name="Raymond J."/>
            <person name="Chen M."/>
            <person name="Blankenship R.E."/>
            <person name="Touchman J.W."/>
        </authorList>
    </citation>
    <scope>NUCLEOTIDE SEQUENCE [LARGE SCALE GENOMIC DNA]</scope>
    <source>
        <strain>ATCC 51547 / Ice1</strain>
    </source>
</reference>
<protein>
    <recommendedName>
        <fullName evidence="1">Acetylglutamate kinase</fullName>
        <ecNumber evidence="1">2.7.2.8</ecNumber>
    </recommendedName>
    <alternativeName>
        <fullName evidence="1">N-acetyl-L-glutamate 5-phosphotransferase</fullName>
    </alternativeName>
    <alternativeName>
        <fullName evidence="1">NAG kinase</fullName>
        <shortName evidence="1">NAGK</shortName>
    </alternativeName>
</protein>
<name>ARGB_HELMI</name>
<accession>B0TCA8</accession>
<sequence length="295" mass="31258">MLKALEKAGILVEALPYIKKFSGKTVVIKYGGAAMVNDQLKEAVIMDVILMKLVGIHPVVVHGGGPEINGMLDRLGLKSHFIQGLRVTDESTMEVVEMVLAGKVNKEIVALIQRFGGKAVGLCGKDGGLIQAKKRFELVKNEGGARVPTDIGFVGDVVKIEPGLVRELADRGYIPVIAPIGVGEKGESYNINADTAAGELAQALKADKLVLLTDVEGILRDRKDPSSLISSLRIDDVPALVEEGVISGGMIPKVACCVEALQGGVGQTHIIDGRLPHSLLLEVFTDKGIGTMVLK</sequence>